<keyword id="KW-0028">Amino-acid biosynthesis</keyword>
<keyword id="KW-0032">Aminotransferase</keyword>
<keyword id="KW-0100">Branched-chain amino acid biosynthesis</keyword>
<keyword id="KW-0963">Cytoplasm</keyword>
<keyword id="KW-0663">Pyridoxal phosphate</keyword>
<keyword id="KW-1185">Reference proteome</keyword>
<keyword id="KW-0808">Transferase</keyword>
<name>BCAT_CAEEL</name>
<gene>
    <name type="primary">bcat-1</name>
    <name type="synonym">eca-39</name>
    <name type="synonym">eca39</name>
    <name type="ORF">K02A4.1</name>
</gene>
<protein>
    <recommendedName>
        <fullName>Branched-chain-amino-acid aminotransferase, cytosolic</fullName>
        <shortName>BCAT</shortName>
        <ecNumber>2.6.1.42</ecNumber>
    </recommendedName>
    <alternativeName>
        <fullName>ECA39 protein</fullName>
    </alternativeName>
</protein>
<accession>P54688</accession>
<feature type="chain" id="PRO_0000103296" description="Branched-chain-amino-acid aminotransferase, cytosolic">
    <location>
        <begin position="1"/>
        <end position="415"/>
    </location>
</feature>
<feature type="modified residue" description="N6-(pyridoxal phosphate)lysine" evidence="1">
    <location>
        <position position="244"/>
    </location>
</feature>
<feature type="sequence conflict" description="In Ref. 2; AAC47236." evidence="3" ref="2">
    <original>D</original>
    <variation>I</variation>
    <location>
        <position position="86"/>
    </location>
</feature>
<feature type="sequence conflict" description="In Ref. 2; AAC47236." evidence="3" ref="2">
    <original>F</original>
    <variation>FS</variation>
    <location>
        <position position="118"/>
    </location>
</feature>
<feature type="sequence conflict" description="In Ref. 2; AAC47236." evidence="3" ref="2">
    <original>MQKFYNT</original>
    <variation>RKILQHN</variation>
    <location>
        <begin position="391"/>
        <end position="397"/>
    </location>
</feature>
<proteinExistence type="evidence at transcript level"/>
<comment type="function">
    <text evidence="2">Catalyzes the first reaction in the catabolism of the essential branched chain amino acids leucine, isoleucine, and valine.</text>
</comment>
<comment type="catalytic activity">
    <reaction evidence="4">
        <text>L-leucine + 2-oxoglutarate = 4-methyl-2-oxopentanoate + L-glutamate</text>
        <dbReference type="Rhea" id="RHEA:18321"/>
        <dbReference type="ChEBI" id="CHEBI:16810"/>
        <dbReference type="ChEBI" id="CHEBI:17865"/>
        <dbReference type="ChEBI" id="CHEBI:29985"/>
        <dbReference type="ChEBI" id="CHEBI:57427"/>
        <dbReference type="EC" id="2.6.1.42"/>
    </reaction>
</comment>
<comment type="catalytic activity">
    <reaction evidence="4">
        <text>L-isoleucine + 2-oxoglutarate = (S)-3-methyl-2-oxopentanoate + L-glutamate</text>
        <dbReference type="Rhea" id="RHEA:24801"/>
        <dbReference type="ChEBI" id="CHEBI:16810"/>
        <dbReference type="ChEBI" id="CHEBI:29985"/>
        <dbReference type="ChEBI" id="CHEBI:35146"/>
        <dbReference type="ChEBI" id="CHEBI:58045"/>
        <dbReference type="EC" id="2.6.1.42"/>
    </reaction>
</comment>
<comment type="catalytic activity">
    <reaction evidence="4">
        <text>L-valine + 2-oxoglutarate = 3-methyl-2-oxobutanoate + L-glutamate</text>
        <dbReference type="Rhea" id="RHEA:24813"/>
        <dbReference type="ChEBI" id="CHEBI:11851"/>
        <dbReference type="ChEBI" id="CHEBI:16810"/>
        <dbReference type="ChEBI" id="CHEBI:29985"/>
        <dbReference type="ChEBI" id="CHEBI:57762"/>
        <dbReference type="EC" id="2.6.1.42"/>
    </reaction>
</comment>
<comment type="cofactor">
    <cofactor>
        <name>pyridoxal 5'-phosphate</name>
        <dbReference type="ChEBI" id="CHEBI:597326"/>
    </cofactor>
</comment>
<comment type="subcellular location">
    <subcellularLocation>
        <location>Cytoplasm</location>
    </subcellularLocation>
</comment>
<comment type="developmental stage">
    <text evidence="2">Expression decreases with increasing age.</text>
</comment>
<comment type="disruption phenotype">
    <text evidence="2">RNAi-mediated knockdown extends mean lifespan by 25% and maximum lifespan by 19%, increases maximum moving speed, and increases levels of the enzyme substrates, L-leucine, L-isoleucine and L-valine.</text>
</comment>
<comment type="similarity">
    <text evidence="3">Belongs to the class-IV pyridoxal-phosphate-dependent aminotransferase family.</text>
</comment>
<comment type="sequence caution" evidence="3">
    <conflict type="frameshift">
        <sequence resource="EMBL-CDS" id="AAC47236"/>
    </conflict>
</comment>
<sequence>MPAILSRVAPRTFNLVGSRLMASAARLETVPREEIHKEYDRKKTFYHRDLEIQLAGPTQLKTKPLDPTKLKFGHTYADYMMTCDWDAERGWHHPKIEPIGELKIHPGAKVLHYASELFEGMKAYRGIDNKIRMFRPEMNMARMKRTALRAALPDFDSEEMINVLTELLRLDQEWVPNSDVCSLYLRPTLIGTDPTLGVGCATEAKMFVITGPVGAYYSTGFQPVSLLADSRFIRAFPGGVGAYKMGCNYAPTIWVGKEAASKNCQQVLWLYGENEDLTEVGTMNIFLFWKNEEGDMELITPPLHRGLILPGVTRDSLLELGREWGEYKVTERTLNMEEVKKALSEKRLYEMFGSGTACVVSPVGKILYHNKVTDEYEELHIPTMSSKFGVMQKFYNTINDIQYGRIIKDGWMRDI</sequence>
<dbReference type="EC" id="2.6.1.42"/>
<dbReference type="EMBL" id="Z67883">
    <property type="protein sequence ID" value="CAA91805.1"/>
    <property type="molecule type" value="Genomic_DNA"/>
</dbReference>
<dbReference type="EMBL" id="U21550">
    <property type="protein sequence ID" value="AAC47236.1"/>
    <property type="status" value="ALT_FRAME"/>
    <property type="molecule type" value="mRNA"/>
</dbReference>
<dbReference type="PIR" id="T23215">
    <property type="entry name" value="T23215"/>
</dbReference>
<dbReference type="RefSeq" id="NP_510144.1">
    <property type="nucleotide sequence ID" value="NM_077743.5"/>
</dbReference>
<dbReference type="SMR" id="P54688"/>
<dbReference type="BioGRID" id="46327">
    <property type="interactions" value="27"/>
</dbReference>
<dbReference type="FunCoup" id="P54688">
    <property type="interactions" value="1821"/>
</dbReference>
<dbReference type="STRING" id="6239.K02A4.1.1"/>
<dbReference type="PaxDb" id="6239-K02A4.1"/>
<dbReference type="PeptideAtlas" id="P54688"/>
<dbReference type="EnsemblMetazoa" id="K02A4.1.1">
    <property type="protein sequence ID" value="K02A4.1.1"/>
    <property type="gene ID" value="WBGene00001149"/>
</dbReference>
<dbReference type="GeneID" id="181423"/>
<dbReference type="KEGG" id="cel:CELE_K02A4.1"/>
<dbReference type="UCSC" id="K02A4.1">
    <property type="organism name" value="c. elegans"/>
</dbReference>
<dbReference type="AGR" id="WB:WBGene00001149"/>
<dbReference type="CTD" id="181423"/>
<dbReference type="WormBase" id="K02A4.1">
    <property type="protein sequence ID" value="CE03457"/>
    <property type="gene ID" value="WBGene00001149"/>
    <property type="gene designation" value="bcat-1"/>
</dbReference>
<dbReference type="eggNOG" id="KOG0975">
    <property type="taxonomic scope" value="Eukaryota"/>
</dbReference>
<dbReference type="GeneTree" id="ENSGT00390000009532"/>
<dbReference type="HOGENOM" id="CLU_031922_0_1_1"/>
<dbReference type="InParanoid" id="P54688"/>
<dbReference type="OMA" id="TDFRFIA"/>
<dbReference type="OrthoDB" id="1732691at2759"/>
<dbReference type="PhylomeDB" id="P54688"/>
<dbReference type="Reactome" id="R-CEL-70895">
    <property type="pathway name" value="Branched-chain amino acid catabolism"/>
</dbReference>
<dbReference type="PRO" id="PR:P54688"/>
<dbReference type="Proteomes" id="UP000001940">
    <property type="component" value="Chromosome X"/>
</dbReference>
<dbReference type="Bgee" id="WBGene00001149">
    <property type="expression patterns" value="Expressed in larva and 4 other cell types or tissues"/>
</dbReference>
<dbReference type="GO" id="GO:0005739">
    <property type="term" value="C:mitochondrion"/>
    <property type="evidence" value="ECO:0007005"/>
    <property type="project" value="WormBase"/>
</dbReference>
<dbReference type="GO" id="GO:0004084">
    <property type="term" value="F:branched-chain-amino-acid transaminase activity"/>
    <property type="evidence" value="ECO:0000318"/>
    <property type="project" value="GO_Central"/>
</dbReference>
<dbReference type="GO" id="GO:0052656">
    <property type="term" value="F:L-isoleucine-2-oxoglutarate transaminase activity"/>
    <property type="evidence" value="ECO:0007669"/>
    <property type="project" value="RHEA"/>
</dbReference>
<dbReference type="GO" id="GO:0052654">
    <property type="term" value="F:L-leucine-2-oxoglutarate transaminase activity"/>
    <property type="evidence" value="ECO:0007669"/>
    <property type="project" value="RHEA"/>
</dbReference>
<dbReference type="GO" id="GO:0052655">
    <property type="term" value="F:L-valine-2-oxoglutarate transaminase activity"/>
    <property type="evidence" value="ECO:0007669"/>
    <property type="project" value="RHEA"/>
</dbReference>
<dbReference type="GO" id="GO:0008340">
    <property type="term" value="P:determination of adult lifespan"/>
    <property type="evidence" value="ECO:0000315"/>
    <property type="project" value="UniProtKB"/>
</dbReference>
<dbReference type="GO" id="GO:0009792">
    <property type="term" value="P:embryo development ending in birth or egg hatching"/>
    <property type="evidence" value="ECO:0000315"/>
    <property type="project" value="WormBase"/>
</dbReference>
<dbReference type="GO" id="GO:0006550">
    <property type="term" value="P:isoleucine catabolic process"/>
    <property type="evidence" value="ECO:0000315"/>
    <property type="project" value="UniProtKB"/>
</dbReference>
<dbReference type="GO" id="GO:0009098">
    <property type="term" value="P:L-leucine biosynthetic process"/>
    <property type="evidence" value="ECO:0000318"/>
    <property type="project" value="GO_Central"/>
</dbReference>
<dbReference type="GO" id="GO:0006552">
    <property type="term" value="P:L-leucine catabolic process"/>
    <property type="evidence" value="ECO:0000315"/>
    <property type="project" value="UniProtKB"/>
</dbReference>
<dbReference type="GO" id="GO:0009099">
    <property type="term" value="P:L-valine biosynthetic process"/>
    <property type="evidence" value="ECO:0000318"/>
    <property type="project" value="GO_Central"/>
</dbReference>
<dbReference type="GO" id="GO:0002119">
    <property type="term" value="P:nematode larval development"/>
    <property type="evidence" value="ECO:0000315"/>
    <property type="project" value="WormBase"/>
</dbReference>
<dbReference type="GO" id="GO:0006574">
    <property type="term" value="P:valine catabolic process"/>
    <property type="evidence" value="ECO:0000315"/>
    <property type="project" value="UniProtKB"/>
</dbReference>
<dbReference type="CDD" id="cd01557">
    <property type="entry name" value="BCAT_beta_family"/>
    <property type="match status" value="1"/>
</dbReference>
<dbReference type="FunFam" id="3.30.470.10:FF:000002">
    <property type="entry name" value="Branched-chain-amino-acid aminotransferase"/>
    <property type="match status" value="1"/>
</dbReference>
<dbReference type="FunFam" id="3.20.10.10:FF:000007">
    <property type="entry name" value="Branched-chain-amino-acid aminotransferase, mitochondrial"/>
    <property type="match status" value="1"/>
</dbReference>
<dbReference type="Gene3D" id="3.30.470.10">
    <property type="match status" value="1"/>
</dbReference>
<dbReference type="Gene3D" id="3.20.10.10">
    <property type="entry name" value="D-amino Acid Aminotransferase, subunit A, domain 2"/>
    <property type="match status" value="1"/>
</dbReference>
<dbReference type="InterPro" id="IPR001544">
    <property type="entry name" value="Aminotrans_IV"/>
</dbReference>
<dbReference type="InterPro" id="IPR018300">
    <property type="entry name" value="Aminotrans_IV_CS"/>
</dbReference>
<dbReference type="InterPro" id="IPR036038">
    <property type="entry name" value="Aminotransferase-like"/>
</dbReference>
<dbReference type="InterPro" id="IPR005786">
    <property type="entry name" value="B_amino_transII"/>
</dbReference>
<dbReference type="InterPro" id="IPR043132">
    <property type="entry name" value="BCAT-like_C"/>
</dbReference>
<dbReference type="InterPro" id="IPR043131">
    <property type="entry name" value="BCAT-like_N"/>
</dbReference>
<dbReference type="InterPro" id="IPR033939">
    <property type="entry name" value="BCAT_family"/>
</dbReference>
<dbReference type="NCBIfam" id="TIGR01123">
    <property type="entry name" value="ilvE_II"/>
    <property type="match status" value="1"/>
</dbReference>
<dbReference type="NCBIfam" id="NF009897">
    <property type="entry name" value="PRK13357.1"/>
    <property type="match status" value="1"/>
</dbReference>
<dbReference type="PANTHER" id="PTHR11825:SF44">
    <property type="entry name" value="BRANCHED-CHAIN-AMINO-ACID AMINOTRANSFERASE"/>
    <property type="match status" value="1"/>
</dbReference>
<dbReference type="PANTHER" id="PTHR11825">
    <property type="entry name" value="SUBGROUP IIII AMINOTRANSFERASE"/>
    <property type="match status" value="1"/>
</dbReference>
<dbReference type="Pfam" id="PF01063">
    <property type="entry name" value="Aminotran_4"/>
    <property type="match status" value="1"/>
</dbReference>
<dbReference type="PIRSF" id="PIRSF006468">
    <property type="entry name" value="BCAT1"/>
    <property type="match status" value="1"/>
</dbReference>
<dbReference type="SUPFAM" id="SSF56752">
    <property type="entry name" value="D-aminoacid aminotransferase-like PLP-dependent enzymes"/>
    <property type="match status" value="1"/>
</dbReference>
<dbReference type="PROSITE" id="PS00770">
    <property type="entry name" value="AA_TRANSFER_CLASS_4"/>
    <property type="match status" value="1"/>
</dbReference>
<reference key="1">
    <citation type="journal article" date="1998" name="Science">
        <title>Genome sequence of the nematode C. elegans: a platform for investigating biology.</title>
        <authorList>
            <consortium name="The C. elegans sequencing consortium"/>
        </authorList>
    </citation>
    <scope>NUCLEOTIDE SEQUENCE [LARGE SCALE GENOMIC DNA]</scope>
    <source>
        <strain>Bristol N2</strain>
    </source>
</reference>
<reference key="2">
    <citation type="journal article" date="1996" name="Proc. Natl. Acad. Sci. U.S.A.">
        <title>ECA39, a conserved gene regulated by c-Myc in mice, is involved in G1/S cell cycle regulation in yeast.</title>
        <authorList>
            <person name="Schuldiner O."/>
            <person name="Eden A."/>
            <person name="Ben-Yosef T."/>
            <person name="Yanuka O."/>
            <person name="Simchen G."/>
            <person name="Benvenisty N."/>
        </authorList>
    </citation>
    <scope>NUCLEOTIDE SEQUENCE [MRNA] OF 21-398</scope>
</reference>
<reference key="3">
    <citation type="journal article" date="2015" name="Nat. Commun.">
        <title>Branched-chain amino acid catabolism is a conserved regulator of physiological ageing.</title>
        <authorList>
            <person name="Mansfeld J."/>
            <person name="Urban N."/>
            <person name="Priebe S."/>
            <person name="Groth M."/>
            <person name="Frahm C."/>
            <person name="Hartmann N."/>
            <person name="Gebauer J."/>
            <person name="Ravichandran M."/>
            <person name="Dommaschk A."/>
            <person name="Schmeisser S."/>
            <person name="Kuhlow D."/>
            <person name="Monajembashi S."/>
            <person name="Bremer-Streck S."/>
            <person name="Hemmerich P."/>
            <person name="Kiehntopf M."/>
            <person name="Zamboni N."/>
            <person name="Englert C."/>
            <person name="Guthke R."/>
            <person name="Kaleta C."/>
            <person name="Platzer M."/>
            <person name="Suehnel J."/>
            <person name="Witte O.W."/>
            <person name="Zarse K."/>
            <person name="Ristow M."/>
        </authorList>
    </citation>
    <scope>FUNCTION</scope>
    <scope>DEVELOPMENTAL STAGE</scope>
    <scope>DISRUPTION PHENOTYPE</scope>
</reference>
<evidence type="ECO:0000250" key="1"/>
<evidence type="ECO:0000269" key="2">
    <source>
    </source>
</evidence>
<evidence type="ECO:0000305" key="3"/>
<evidence type="ECO:0000305" key="4">
    <source>
    </source>
</evidence>
<organism>
    <name type="scientific">Caenorhabditis elegans</name>
    <dbReference type="NCBI Taxonomy" id="6239"/>
    <lineage>
        <taxon>Eukaryota</taxon>
        <taxon>Metazoa</taxon>
        <taxon>Ecdysozoa</taxon>
        <taxon>Nematoda</taxon>
        <taxon>Chromadorea</taxon>
        <taxon>Rhabditida</taxon>
        <taxon>Rhabditina</taxon>
        <taxon>Rhabditomorpha</taxon>
        <taxon>Rhabditoidea</taxon>
        <taxon>Rhabditidae</taxon>
        <taxon>Peloderinae</taxon>
        <taxon>Caenorhabditis</taxon>
    </lineage>
</organism>